<evidence type="ECO:0000255" key="1">
    <source>
        <dbReference type="HAMAP-Rule" id="MF_01576"/>
    </source>
</evidence>
<name>FOLD_NITV2</name>
<feature type="chain" id="PRO_0000268339" description="Bifunctional protein FolD">
    <location>
        <begin position="1"/>
        <end position="286"/>
    </location>
</feature>
<feature type="binding site" evidence="1">
    <location>
        <begin position="164"/>
        <end position="166"/>
    </location>
    <ligand>
        <name>NADP(+)</name>
        <dbReference type="ChEBI" id="CHEBI:58349"/>
    </ligand>
</feature>
<feature type="binding site" evidence="1">
    <location>
        <position position="193"/>
    </location>
    <ligand>
        <name>NADP(+)</name>
        <dbReference type="ChEBI" id="CHEBI:58349"/>
    </ligand>
</feature>
<feature type="binding site" evidence="1">
    <location>
        <position position="234"/>
    </location>
    <ligand>
        <name>NADP(+)</name>
        <dbReference type="ChEBI" id="CHEBI:58349"/>
    </ligand>
</feature>
<sequence length="286" mass="30380">MQLLDGKATAATIREELRAEIAALTPRARRAPGLAVILVGEDPASQVYVRNKERACHDTGIVSEAFRLAPTTTQEELERLIADLNVRPDIDGILLQLPLPRGLDAQRCLEAIDPAKDVDGFHPQNMGRLALGLPGFRPCTPAGVMTLLERYDLSPSGRKAVVVGRSNIVGKPLALMLGAPGKYANATVTVCHSGTPDLAAECRTADFLFLAIGRPRFVTADMVREGAVVVDVGINRTETGLAGDCDFEGVSRVASAITPVPGGVGPMTIAQLLVNTVQSWKVRCGL</sequence>
<keyword id="KW-0028">Amino-acid biosynthesis</keyword>
<keyword id="KW-0368">Histidine biosynthesis</keyword>
<keyword id="KW-0378">Hydrolase</keyword>
<keyword id="KW-0486">Methionine biosynthesis</keyword>
<keyword id="KW-0511">Multifunctional enzyme</keyword>
<keyword id="KW-0521">NADP</keyword>
<keyword id="KW-0554">One-carbon metabolism</keyword>
<keyword id="KW-0560">Oxidoreductase</keyword>
<keyword id="KW-0658">Purine biosynthesis</keyword>
<keyword id="KW-1185">Reference proteome</keyword>
<protein>
    <recommendedName>
        <fullName evidence="1">Bifunctional protein FolD</fullName>
    </recommendedName>
    <domain>
        <recommendedName>
            <fullName evidence="1">Methylenetetrahydrofolate dehydrogenase</fullName>
            <ecNumber evidence="1">1.5.1.5</ecNumber>
        </recommendedName>
    </domain>
    <domain>
        <recommendedName>
            <fullName evidence="1">Methenyltetrahydrofolate cyclohydrolase</fullName>
            <ecNumber evidence="1">3.5.4.9</ecNumber>
        </recommendedName>
    </domain>
</protein>
<reference key="1">
    <citation type="journal article" date="2004" name="Nat. Biotechnol.">
        <title>The genome sequence of the anaerobic, sulfate-reducing bacterium Desulfovibrio vulgaris Hildenborough.</title>
        <authorList>
            <person name="Heidelberg J.F."/>
            <person name="Seshadri R."/>
            <person name="Haveman S.A."/>
            <person name="Hemme C.L."/>
            <person name="Paulsen I.T."/>
            <person name="Kolonay J.F."/>
            <person name="Eisen J.A."/>
            <person name="Ward N.L."/>
            <person name="Methe B.A."/>
            <person name="Brinkac L.M."/>
            <person name="Daugherty S.C."/>
            <person name="DeBoy R.T."/>
            <person name="Dodson R.J."/>
            <person name="Durkin A.S."/>
            <person name="Madupu R."/>
            <person name="Nelson W.C."/>
            <person name="Sullivan S.A."/>
            <person name="Fouts D.E."/>
            <person name="Haft D.H."/>
            <person name="Selengut J."/>
            <person name="Peterson J.D."/>
            <person name="Davidsen T.M."/>
            <person name="Zafar N."/>
            <person name="Zhou L."/>
            <person name="Radune D."/>
            <person name="Dimitrov G."/>
            <person name="Hance M."/>
            <person name="Tran K."/>
            <person name="Khouri H.M."/>
            <person name="Gill J."/>
            <person name="Utterback T.R."/>
            <person name="Feldblyum T.V."/>
            <person name="Wall J.D."/>
            <person name="Voordouw G."/>
            <person name="Fraser C.M."/>
        </authorList>
    </citation>
    <scope>NUCLEOTIDE SEQUENCE [LARGE SCALE GENOMIC DNA]</scope>
    <source>
        <strain>ATCC 29579 / DSM 644 / CCUG 34227 / NCIMB 8303 / VKM B-1760 / Hildenborough</strain>
    </source>
</reference>
<comment type="function">
    <text evidence="1">Catalyzes the oxidation of 5,10-methylenetetrahydrofolate to 5,10-methenyltetrahydrofolate and then the hydrolysis of 5,10-methenyltetrahydrofolate to 10-formyltetrahydrofolate.</text>
</comment>
<comment type="catalytic activity">
    <reaction evidence="1">
        <text>(6R)-5,10-methylene-5,6,7,8-tetrahydrofolate + NADP(+) = (6R)-5,10-methenyltetrahydrofolate + NADPH</text>
        <dbReference type="Rhea" id="RHEA:22812"/>
        <dbReference type="ChEBI" id="CHEBI:15636"/>
        <dbReference type="ChEBI" id="CHEBI:57455"/>
        <dbReference type="ChEBI" id="CHEBI:57783"/>
        <dbReference type="ChEBI" id="CHEBI:58349"/>
        <dbReference type="EC" id="1.5.1.5"/>
    </reaction>
</comment>
<comment type="catalytic activity">
    <reaction evidence="1">
        <text>(6R)-5,10-methenyltetrahydrofolate + H2O = (6R)-10-formyltetrahydrofolate + H(+)</text>
        <dbReference type="Rhea" id="RHEA:23700"/>
        <dbReference type="ChEBI" id="CHEBI:15377"/>
        <dbReference type="ChEBI" id="CHEBI:15378"/>
        <dbReference type="ChEBI" id="CHEBI:57455"/>
        <dbReference type="ChEBI" id="CHEBI:195366"/>
        <dbReference type="EC" id="3.5.4.9"/>
    </reaction>
</comment>
<comment type="pathway">
    <text evidence="1">One-carbon metabolism; tetrahydrofolate interconversion.</text>
</comment>
<comment type="subunit">
    <text evidence="1">Homodimer.</text>
</comment>
<comment type="similarity">
    <text evidence="1">Belongs to the tetrahydrofolate dehydrogenase/cyclohydrolase family.</text>
</comment>
<organism>
    <name type="scientific">Nitratidesulfovibrio vulgaris (strain ATCC 29579 / DSM 644 / CCUG 34227 / NCIMB 8303 / VKM B-1760 / Hildenborough)</name>
    <name type="common">Desulfovibrio vulgaris</name>
    <dbReference type="NCBI Taxonomy" id="882"/>
    <lineage>
        <taxon>Bacteria</taxon>
        <taxon>Pseudomonadati</taxon>
        <taxon>Thermodesulfobacteriota</taxon>
        <taxon>Desulfovibrionia</taxon>
        <taxon>Desulfovibrionales</taxon>
        <taxon>Desulfovibrionaceae</taxon>
        <taxon>Nitratidesulfovibrio</taxon>
    </lineage>
</organism>
<gene>
    <name evidence="1" type="primary">folD</name>
    <name type="ordered locus">DVU_0323</name>
</gene>
<proteinExistence type="inferred from homology"/>
<accession>Q72F91</accession>
<dbReference type="EC" id="1.5.1.5" evidence="1"/>
<dbReference type="EC" id="3.5.4.9" evidence="1"/>
<dbReference type="EMBL" id="AE017285">
    <property type="protein sequence ID" value="AAS94806.1"/>
    <property type="molecule type" value="Genomic_DNA"/>
</dbReference>
<dbReference type="RefSeq" id="WP_010937630.1">
    <property type="nucleotide sequence ID" value="NC_002937.3"/>
</dbReference>
<dbReference type="RefSeq" id="YP_009547.1">
    <property type="nucleotide sequence ID" value="NC_002937.3"/>
</dbReference>
<dbReference type="SMR" id="Q72F91"/>
<dbReference type="STRING" id="882.DVU_0323"/>
<dbReference type="PaxDb" id="882-DVU_0323"/>
<dbReference type="EnsemblBacteria" id="AAS94806">
    <property type="protein sequence ID" value="AAS94806"/>
    <property type="gene ID" value="DVU_0323"/>
</dbReference>
<dbReference type="KEGG" id="dvu:DVU_0323"/>
<dbReference type="PATRIC" id="fig|882.5.peg.307"/>
<dbReference type="eggNOG" id="COG0190">
    <property type="taxonomic scope" value="Bacteria"/>
</dbReference>
<dbReference type="HOGENOM" id="CLU_034045_0_0_7"/>
<dbReference type="OrthoDB" id="9803580at2"/>
<dbReference type="PhylomeDB" id="Q72F91"/>
<dbReference type="UniPathway" id="UPA00193"/>
<dbReference type="Proteomes" id="UP000002194">
    <property type="component" value="Chromosome"/>
</dbReference>
<dbReference type="GO" id="GO:0005829">
    <property type="term" value="C:cytosol"/>
    <property type="evidence" value="ECO:0007669"/>
    <property type="project" value="TreeGrafter"/>
</dbReference>
<dbReference type="GO" id="GO:0004477">
    <property type="term" value="F:methenyltetrahydrofolate cyclohydrolase activity"/>
    <property type="evidence" value="ECO:0007669"/>
    <property type="project" value="UniProtKB-UniRule"/>
</dbReference>
<dbReference type="GO" id="GO:0004488">
    <property type="term" value="F:methylenetetrahydrofolate dehydrogenase (NADP+) activity"/>
    <property type="evidence" value="ECO:0007669"/>
    <property type="project" value="UniProtKB-UniRule"/>
</dbReference>
<dbReference type="GO" id="GO:0000105">
    <property type="term" value="P:L-histidine biosynthetic process"/>
    <property type="evidence" value="ECO:0007669"/>
    <property type="project" value="UniProtKB-KW"/>
</dbReference>
<dbReference type="GO" id="GO:0009086">
    <property type="term" value="P:methionine biosynthetic process"/>
    <property type="evidence" value="ECO:0007669"/>
    <property type="project" value="UniProtKB-KW"/>
</dbReference>
<dbReference type="GO" id="GO:0006164">
    <property type="term" value="P:purine nucleotide biosynthetic process"/>
    <property type="evidence" value="ECO:0007669"/>
    <property type="project" value="UniProtKB-KW"/>
</dbReference>
<dbReference type="GO" id="GO:0035999">
    <property type="term" value="P:tetrahydrofolate interconversion"/>
    <property type="evidence" value="ECO:0007669"/>
    <property type="project" value="UniProtKB-UniRule"/>
</dbReference>
<dbReference type="CDD" id="cd01080">
    <property type="entry name" value="NAD_bind_m-THF_DH_Cyclohyd"/>
    <property type="match status" value="1"/>
</dbReference>
<dbReference type="FunFam" id="3.40.50.720:FF:000189">
    <property type="entry name" value="Bifunctional protein FolD"/>
    <property type="match status" value="1"/>
</dbReference>
<dbReference type="FunFam" id="3.40.50.10860:FF:000005">
    <property type="entry name" value="C-1-tetrahydrofolate synthase, cytoplasmic, putative"/>
    <property type="match status" value="1"/>
</dbReference>
<dbReference type="Gene3D" id="3.40.50.10860">
    <property type="entry name" value="Leucine Dehydrogenase, chain A, domain 1"/>
    <property type="match status" value="1"/>
</dbReference>
<dbReference type="Gene3D" id="3.40.50.720">
    <property type="entry name" value="NAD(P)-binding Rossmann-like Domain"/>
    <property type="match status" value="1"/>
</dbReference>
<dbReference type="HAMAP" id="MF_01576">
    <property type="entry name" value="THF_DHG_CYH"/>
    <property type="match status" value="1"/>
</dbReference>
<dbReference type="InterPro" id="IPR046346">
    <property type="entry name" value="Aminoacid_DH-like_N_sf"/>
</dbReference>
<dbReference type="InterPro" id="IPR036291">
    <property type="entry name" value="NAD(P)-bd_dom_sf"/>
</dbReference>
<dbReference type="InterPro" id="IPR000672">
    <property type="entry name" value="THF_DH/CycHdrlase"/>
</dbReference>
<dbReference type="InterPro" id="IPR020630">
    <property type="entry name" value="THF_DH/CycHdrlase_cat_dom"/>
</dbReference>
<dbReference type="InterPro" id="IPR020867">
    <property type="entry name" value="THF_DH/CycHdrlase_CS"/>
</dbReference>
<dbReference type="InterPro" id="IPR020631">
    <property type="entry name" value="THF_DH/CycHdrlase_NAD-bd_dom"/>
</dbReference>
<dbReference type="NCBIfam" id="NF008058">
    <property type="entry name" value="PRK10792.1"/>
    <property type="match status" value="1"/>
</dbReference>
<dbReference type="NCBIfam" id="NF010781">
    <property type="entry name" value="PRK14184.1"/>
    <property type="match status" value="1"/>
</dbReference>
<dbReference type="NCBIfam" id="NF010783">
    <property type="entry name" value="PRK14186.1"/>
    <property type="match status" value="1"/>
</dbReference>
<dbReference type="PANTHER" id="PTHR48099:SF5">
    <property type="entry name" value="C-1-TETRAHYDROFOLATE SYNTHASE, CYTOPLASMIC"/>
    <property type="match status" value="1"/>
</dbReference>
<dbReference type="PANTHER" id="PTHR48099">
    <property type="entry name" value="C-1-TETRAHYDROFOLATE SYNTHASE, CYTOPLASMIC-RELATED"/>
    <property type="match status" value="1"/>
</dbReference>
<dbReference type="Pfam" id="PF00763">
    <property type="entry name" value="THF_DHG_CYH"/>
    <property type="match status" value="1"/>
</dbReference>
<dbReference type="Pfam" id="PF02882">
    <property type="entry name" value="THF_DHG_CYH_C"/>
    <property type="match status" value="1"/>
</dbReference>
<dbReference type="PRINTS" id="PR00085">
    <property type="entry name" value="THFDHDRGNASE"/>
</dbReference>
<dbReference type="SUPFAM" id="SSF53223">
    <property type="entry name" value="Aminoacid dehydrogenase-like, N-terminal domain"/>
    <property type="match status" value="1"/>
</dbReference>
<dbReference type="SUPFAM" id="SSF51735">
    <property type="entry name" value="NAD(P)-binding Rossmann-fold domains"/>
    <property type="match status" value="1"/>
</dbReference>
<dbReference type="PROSITE" id="PS00767">
    <property type="entry name" value="THF_DHG_CYH_2"/>
    <property type="match status" value="1"/>
</dbReference>